<organism>
    <name type="scientific">Caenorhabditis elegans</name>
    <dbReference type="NCBI Taxonomy" id="6239"/>
    <lineage>
        <taxon>Eukaryota</taxon>
        <taxon>Metazoa</taxon>
        <taxon>Ecdysozoa</taxon>
        <taxon>Nematoda</taxon>
        <taxon>Chromadorea</taxon>
        <taxon>Rhabditida</taxon>
        <taxon>Rhabditina</taxon>
        <taxon>Rhabditomorpha</taxon>
        <taxon>Rhabditoidea</taxon>
        <taxon>Rhabditidae</taxon>
        <taxon>Peloderinae</taxon>
        <taxon>Caenorhabditis</taxon>
    </lineage>
</organism>
<evidence type="ECO:0000255" key="1">
    <source>
        <dbReference type="PROSITE-ProRule" id="PRU00407"/>
    </source>
</evidence>
<evidence type="ECO:0000255" key="2">
    <source>
        <dbReference type="PROSITE-ProRule" id="PRU01189"/>
    </source>
</evidence>
<evidence type="ECO:0000305" key="3"/>
<gene>
    <name type="primary">nhr-197</name>
    <name type="ORF">K06B4.7</name>
</gene>
<feature type="chain" id="PRO_0000223603" description="Nuclear hormone receptor family member nhr-197">
    <location>
        <begin position="1"/>
        <end position="340"/>
    </location>
</feature>
<feature type="domain" description="NR LBD" evidence="2">
    <location>
        <begin position="98"/>
        <end position="337"/>
    </location>
</feature>
<feature type="DNA-binding region" description="Nuclear receptor" evidence="1">
    <location>
        <begin position="1"/>
        <end position="75"/>
    </location>
</feature>
<feature type="zinc finger region" description="NR C4-type" evidence="1">
    <location>
        <begin position="3"/>
        <end position="23"/>
    </location>
</feature>
<feature type="zinc finger region" description="NR C4-type" evidence="1">
    <location>
        <begin position="39"/>
        <end position="58"/>
    </location>
</feature>
<comment type="function">
    <text>Orphan nuclear receptor.</text>
</comment>
<comment type="subcellular location">
    <subcellularLocation>
        <location evidence="1">Nucleus</location>
    </subcellularLocation>
</comment>
<comment type="similarity">
    <text evidence="3">Belongs to the nuclear hormone receptor family.</text>
</comment>
<proteinExistence type="inferred from homology"/>
<name>NH197_CAEEL</name>
<sequence>MNCVVCSGRATNRNYGAMSCFACKMFFHRTVYKNLLFRCKRIQNCTIHFKIFPKCRACRFQKCLIVGMTLAPLNDGIVSIGNQSDYSYAKLLDDLKFKNDKNYSHFVNFYSLEDPSLADILKDRGIMKLVKRTPKTLNDVDQWSIMMAYSRISYFLDFNFIRDLDSSDKNTLFKYNISRAGCLALAKCAFNENKPKLTFPNDVDAFPSEMYNLCGSSTAVLNQVSGQVIAKFVELKIKDEEYLLLILVMFCNPSISNDFSDKTKLALSSHQQAFCSALFRYCQINYSKSAPTRFTELLSLFGIVNKSVDNMNNLSMMLQFCEPKFQFKRIMQDLFSNSLL</sequence>
<accession>O17931</accession>
<protein>
    <recommendedName>
        <fullName>Nuclear hormone receptor family member nhr-197</fullName>
    </recommendedName>
</protein>
<keyword id="KW-0238">DNA-binding</keyword>
<keyword id="KW-0479">Metal-binding</keyword>
<keyword id="KW-0539">Nucleus</keyword>
<keyword id="KW-0675">Receptor</keyword>
<keyword id="KW-1185">Reference proteome</keyword>
<keyword id="KW-0804">Transcription</keyword>
<keyword id="KW-0805">Transcription regulation</keyword>
<keyword id="KW-0862">Zinc</keyword>
<keyword id="KW-0863">Zinc-finger</keyword>
<dbReference type="EMBL" id="Z83233">
    <property type="protein sequence ID" value="CAB05764.2"/>
    <property type="molecule type" value="Genomic_DNA"/>
</dbReference>
<dbReference type="PIR" id="T23368">
    <property type="entry name" value="T23368"/>
</dbReference>
<dbReference type="RefSeq" id="NP_506901.1">
    <property type="nucleotide sequence ID" value="NM_074500.3"/>
</dbReference>
<dbReference type="SMR" id="O17931"/>
<dbReference type="STRING" id="6239.K06B4.7.1"/>
<dbReference type="PaxDb" id="6239-K06B4.7"/>
<dbReference type="EnsemblMetazoa" id="K06B4.7.1">
    <property type="protein sequence ID" value="K06B4.7.1"/>
    <property type="gene ID" value="WBGene00010602"/>
</dbReference>
<dbReference type="GeneID" id="187055"/>
<dbReference type="KEGG" id="cel:CELE_K06B4.7"/>
<dbReference type="UCSC" id="K06B4.7">
    <property type="organism name" value="c. elegans"/>
</dbReference>
<dbReference type="AGR" id="WB:WBGene00010602"/>
<dbReference type="CTD" id="187055"/>
<dbReference type="WormBase" id="K06B4.7">
    <property type="protein sequence ID" value="CE25931"/>
    <property type="gene ID" value="WBGene00010602"/>
    <property type="gene designation" value="nhr-197"/>
</dbReference>
<dbReference type="GeneTree" id="ENSGT00970000195839"/>
<dbReference type="HOGENOM" id="CLU_007368_3_0_1"/>
<dbReference type="InParanoid" id="O17931"/>
<dbReference type="OrthoDB" id="10018779at2759"/>
<dbReference type="PhylomeDB" id="O17931"/>
<dbReference type="PRO" id="PR:O17931"/>
<dbReference type="Proteomes" id="UP000001940">
    <property type="component" value="Chromosome V"/>
</dbReference>
<dbReference type="GO" id="GO:0005634">
    <property type="term" value="C:nucleus"/>
    <property type="evidence" value="ECO:0007669"/>
    <property type="project" value="UniProtKB-SubCell"/>
</dbReference>
<dbReference type="GO" id="GO:0003700">
    <property type="term" value="F:DNA-binding transcription factor activity"/>
    <property type="evidence" value="ECO:0007669"/>
    <property type="project" value="InterPro"/>
</dbReference>
<dbReference type="GO" id="GO:0000978">
    <property type="term" value="F:RNA polymerase II cis-regulatory region sequence-specific DNA binding"/>
    <property type="evidence" value="ECO:0007669"/>
    <property type="project" value="InterPro"/>
</dbReference>
<dbReference type="GO" id="GO:0008270">
    <property type="term" value="F:zinc ion binding"/>
    <property type="evidence" value="ECO:0007669"/>
    <property type="project" value="UniProtKB-KW"/>
</dbReference>
<dbReference type="CDD" id="cd06960">
    <property type="entry name" value="NR_DBD_HNF4A"/>
    <property type="match status" value="1"/>
</dbReference>
<dbReference type="Gene3D" id="3.30.50.10">
    <property type="entry name" value="Erythroid Transcription Factor GATA-1, subunit A"/>
    <property type="match status" value="1"/>
</dbReference>
<dbReference type="Gene3D" id="1.10.565.10">
    <property type="entry name" value="Retinoid X Receptor"/>
    <property type="match status" value="1"/>
</dbReference>
<dbReference type="InterPro" id="IPR049636">
    <property type="entry name" value="HNF4-like_DBD"/>
</dbReference>
<dbReference type="InterPro" id="IPR035500">
    <property type="entry name" value="NHR-like_dom_sf"/>
</dbReference>
<dbReference type="InterPro" id="IPR000536">
    <property type="entry name" value="Nucl_hrmn_rcpt_lig-bd"/>
</dbReference>
<dbReference type="InterPro" id="IPR001628">
    <property type="entry name" value="Znf_hrmn_rcpt"/>
</dbReference>
<dbReference type="InterPro" id="IPR013088">
    <property type="entry name" value="Znf_NHR/GATA"/>
</dbReference>
<dbReference type="PANTHER" id="PTHR45886:SF2">
    <property type="entry name" value="NUCLEAR HORMONE RECEPTOR FAMILY-RELATED"/>
    <property type="match status" value="1"/>
</dbReference>
<dbReference type="PANTHER" id="PTHR45886">
    <property type="entry name" value="NUCLEAR HORMONE RECEPTOR FAMILY-RELATED-RELATED"/>
    <property type="match status" value="1"/>
</dbReference>
<dbReference type="Pfam" id="PF00104">
    <property type="entry name" value="Hormone_recep"/>
    <property type="match status" value="1"/>
</dbReference>
<dbReference type="Pfam" id="PF00105">
    <property type="entry name" value="zf-C4"/>
    <property type="match status" value="1"/>
</dbReference>
<dbReference type="PRINTS" id="PR00047">
    <property type="entry name" value="STROIDFINGER"/>
</dbReference>
<dbReference type="SMART" id="SM00430">
    <property type="entry name" value="HOLI"/>
    <property type="match status" value="1"/>
</dbReference>
<dbReference type="SMART" id="SM00399">
    <property type="entry name" value="ZnF_C4"/>
    <property type="match status" value="1"/>
</dbReference>
<dbReference type="SUPFAM" id="SSF57716">
    <property type="entry name" value="Glucocorticoid receptor-like (DNA-binding domain)"/>
    <property type="match status" value="1"/>
</dbReference>
<dbReference type="SUPFAM" id="SSF48508">
    <property type="entry name" value="Nuclear receptor ligand-binding domain"/>
    <property type="match status" value="1"/>
</dbReference>
<dbReference type="PROSITE" id="PS51843">
    <property type="entry name" value="NR_LBD"/>
    <property type="match status" value="1"/>
</dbReference>
<dbReference type="PROSITE" id="PS51030">
    <property type="entry name" value="NUCLEAR_REC_DBD_2"/>
    <property type="match status" value="1"/>
</dbReference>
<reference key="1">
    <citation type="journal article" date="1998" name="Science">
        <title>Genome sequence of the nematode C. elegans: a platform for investigating biology.</title>
        <authorList>
            <consortium name="The C. elegans sequencing consortium"/>
        </authorList>
    </citation>
    <scope>NUCLEOTIDE SEQUENCE [LARGE SCALE GENOMIC DNA]</scope>
    <source>
        <strain>Bristol N2</strain>
    </source>
</reference>